<evidence type="ECO:0000255" key="1">
    <source>
        <dbReference type="HAMAP-Rule" id="MF_01066"/>
    </source>
</evidence>
<organism>
    <name type="scientific">Shigella boydii serotype 4 (strain Sb227)</name>
    <dbReference type="NCBI Taxonomy" id="300268"/>
    <lineage>
        <taxon>Bacteria</taxon>
        <taxon>Pseudomonadati</taxon>
        <taxon>Pseudomonadota</taxon>
        <taxon>Gammaproteobacteria</taxon>
        <taxon>Enterobacterales</taxon>
        <taxon>Enterobacteriaceae</taxon>
        <taxon>Shigella</taxon>
    </lineage>
</organism>
<accession>Q31ZA3</accession>
<feature type="chain" id="PRO_1000064515" description="Glucans biosynthesis protein C">
    <location>
        <begin position="1"/>
        <end position="385"/>
    </location>
</feature>
<feature type="transmembrane region" description="Helical" evidence="1">
    <location>
        <begin position="17"/>
        <end position="37"/>
    </location>
</feature>
<feature type="transmembrane region" description="Helical" evidence="1">
    <location>
        <begin position="60"/>
        <end position="80"/>
    </location>
</feature>
<feature type="transmembrane region" description="Helical" evidence="1">
    <location>
        <begin position="91"/>
        <end position="111"/>
    </location>
</feature>
<feature type="transmembrane region" description="Helical" evidence="1">
    <location>
        <begin position="137"/>
        <end position="157"/>
    </location>
</feature>
<feature type="transmembrane region" description="Helical" evidence="1">
    <location>
        <begin position="173"/>
        <end position="193"/>
    </location>
</feature>
<feature type="transmembrane region" description="Helical" evidence="1">
    <location>
        <begin position="212"/>
        <end position="232"/>
    </location>
</feature>
<feature type="transmembrane region" description="Helical" evidence="1">
    <location>
        <begin position="239"/>
        <end position="259"/>
    </location>
</feature>
<feature type="transmembrane region" description="Helical" evidence="1">
    <location>
        <begin position="274"/>
        <end position="294"/>
    </location>
</feature>
<feature type="transmembrane region" description="Helical" evidence="1">
    <location>
        <begin position="311"/>
        <end position="331"/>
    </location>
</feature>
<feature type="transmembrane region" description="Helical" evidence="1">
    <location>
        <begin position="338"/>
        <end position="358"/>
    </location>
</feature>
<proteinExistence type="inferred from homology"/>
<gene>
    <name evidence="1" type="primary">mdoC</name>
    <name evidence="1" type="synonym">opgC</name>
    <name type="ordered locus">SBO_2019</name>
</gene>
<dbReference type="EC" id="2.1.-.-" evidence="1"/>
<dbReference type="EMBL" id="CP000036">
    <property type="protein sequence ID" value="ABB66605.1"/>
    <property type="molecule type" value="Genomic_DNA"/>
</dbReference>
<dbReference type="RefSeq" id="WP_001070335.1">
    <property type="nucleotide sequence ID" value="NC_007613.1"/>
</dbReference>
<dbReference type="KEGG" id="sbo:SBO_2019"/>
<dbReference type="HOGENOM" id="CLU_036182_2_0_6"/>
<dbReference type="UniPathway" id="UPA00637"/>
<dbReference type="Proteomes" id="UP000007067">
    <property type="component" value="Chromosome"/>
</dbReference>
<dbReference type="GO" id="GO:0005886">
    <property type="term" value="C:plasma membrane"/>
    <property type="evidence" value="ECO:0007669"/>
    <property type="project" value="UniProtKB-SubCell"/>
</dbReference>
<dbReference type="GO" id="GO:0016747">
    <property type="term" value="F:acyltransferase activity, transferring groups other than amino-acyl groups"/>
    <property type="evidence" value="ECO:0007669"/>
    <property type="project" value="InterPro"/>
</dbReference>
<dbReference type="GO" id="GO:0016741">
    <property type="term" value="F:transferase activity, transferring one-carbon groups"/>
    <property type="evidence" value="ECO:0007669"/>
    <property type="project" value="UniProtKB-UniRule"/>
</dbReference>
<dbReference type="GO" id="GO:0009250">
    <property type="term" value="P:glucan biosynthetic process"/>
    <property type="evidence" value="ECO:0007669"/>
    <property type="project" value="UniProtKB-UniRule"/>
</dbReference>
<dbReference type="HAMAP" id="MF_01066">
    <property type="entry name" value="MdoC_OpgC"/>
    <property type="match status" value="1"/>
</dbReference>
<dbReference type="InterPro" id="IPR002656">
    <property type="entry name" value="Acyl_transf_3_dom"/>
</dbReference>
<dbReference type="InterPro" id="IPR050623">
    <property type="entry name" value="Glucan_succinyl_AcylTrfase"/>
</dbReference>
<dbReference type="InterPro" id="IPR023723">
    <property type="entry name" value="Glucans_biosynth_C"/>
</dbReference>
<dbReference type="NCBIfam" id="NF003014">
    <property type="entry name" value="PRK03854.1"/>
    <property type="match status" value="1"/>
</dbReference>
<dbReference type="PANTHER" id="PTHR36927">
    <property type="entry name" value="BLR4337 PROTEIN"/>
    <property type="match status" value="1"/>
</dbReference>
<dbReference type="PANTHER" id="PTHR36927:SF3">
    <property type="entry name" value="GLUCANS BIOSYNTHESIS PROTEIN C"/>
    <property type="match status" value="1"/>
</dbReference>
<dbReference type="Pfam" id="PF01757">
    <property type="entry name" value="Acyl_transf_3"/>
    <property type="match status" value="1"/>
</dbReference>
<sequence length="385" mass="44685">MNPVPAQREYFLDSIRAWLMLLGIPFHISLIYSSHTWHVNSAEPSLWLTLFNDFIHSFRMLVFFVISGYFSYMLFLRYPLKKWWKVRVERVGIPMLTAIPLLTLPQFIMLQYVKGKAESWPGLSLYDKYNTLAWELISHLWFLLVLVVMTTLCVWIFKRIRNNLENSDKTNKKFSMVKLSVIFLCLGIGYAVIRRTIFIVYPPILSNGMFNFIVMQTLFYLPFFILGALAFIFPHLKALFTTPSRGCTLAAALAFVAYLLNQRYGSGDAWMYETESVITMVLGLWMVNVVFSFGHRLLNFQSARVTYFVNASLFIYLVHHPLTLFFGAYITPHITSNWLGFLCGLIFVVGIAIILYEIHLRIPLLKFLFSGKPVVKRENDKAPAR</sequence>
<name>OPGC_SHIBS</name>
<comment type="function">
    <text evidence="1">Necessary for the succinyl substitution of periplasmic glucans. Could catalyze the transfer of succinyl residues from the cytoplasmic side of the membrane to the nascent glucan backbones on the periplasmic side of the membrane.</text>
</comment>
<comment type="pathway">
    <text evidence="1">Glycan metabolism; osmoregulated periplasmic glucan (OPG) biosynthesis.</text>
</comment>
<comment type="subcellular location">
    <subcellularLocation>
        <location evidence="1">Cell membrane</location>
        <topology evidence="1">Multi-pass membrane protein</topology>
    </subcellularLocation>
</comment>
<comment type="similarity">
    <text evidence="1">Belongs to the acyltransferase 3 family. OpgC subfamily.</text>
</comment>
<protein>
    <recommendedName>
        <fullName evidence="1">Glucans biosynthesis protein C</fullName>
        <ecNumber evidence="1">2.1.-.-</ecNumber>
    </recommendedName>
</protein>
<reference key="1">
    <citation type="journal article" date="2005" name="Nucleic Acids Res.">
        <title>Genome dynamics and diversity of Shigella species, the etiologic agents of bacillary dysentery.</title>
        <authorList>
            <person name="Yang F."/>
            <person name="Yang J."/>
            <person name="Zhang X."/>
            <person name="Chen L."/>
            <person name="Jiang Y."/>
            <person name="Yan Y."/>
            <person name="Tang X."/>
            <person name="Wang J."/>
            <person name="Xiong Z."/>
            <person name="Dong J."/>
            <person name="Xue Y."/>
            <person name="Zhu Y."/>
            <person name="Xu X."/>
            <person name="Sun L."/>
            <person name="Chen S."/>
            <person name="Nie H."/>
            <person name="Peng J."/>
            <person name="Xu J."/>
            <person name="Wang Y."/>
            <person name="Yuan Z."/>
            <person name="Wen Y."/>
            <person name="Yao Z."/>
            <person name="Shen Y."/>
            <person name="Qiang B."/>
            <person name="Hou Y."/>
            <person name="Yu J."/>
            <person name="Jin Q."/>
        </authorList>
    </citation>
    <scope>NUCLEOTIDE SEQUENCE [LARGE SCALE GENOMIC DNA]</scope>
    <source>
        <strain>Sb227</strain>
    </source>
</reference>
<keyword id="KW-0012">Acyltransferase</keyword>
<keyword id="KW-1003">Cell membrane</keyword>
<keyword id="KW-0472">Membrane</keyword>
<keyword id="KW-0808">Transferase</keyword>
<keyword id="KW-0812">Transmembrane</keyword>
<keyword id="KW-1133">Transmembrane helix</keyword>